<protein>
    <recommendedName>
        <fullName evidence="11">Myb family transcription factor APL</fullName>
        <shortName evidence="11">AtAPL</shortName>
    </recommendedName>
    <alternativeName>
        <fullName evidence="11">Protein ALTERED PHLOEM DEVELOPMENT</fullName>
    </alternativeName>
    <alternativeName>
        <fullName evidence="14">Protein FE</fullName>
    </alternativeName>
    <alternativeName>
        <fullName evidence="12">Protein PHOSPHATE STARVATION RESPONSE 2</fullName>
        <shortName evidence="12">AtPHR2</shortName>
    </alternativeName>
    <alternativeName>
        <fullName evidence="15">Protein PHR1-LIKE 14</fullName>
    </alternativeName>
    <alternativeName>
        <fullName>Protein WOODY</fullName>
    </alternativeName>
</protein>
<sequence>MFHAKKPSSMNGSYENRAMCVQGDSGLVLTTDPKPRLRWTVELHERFVDAVAQLGGPDKATPKTIMRVMGVKGLTLYHLKSHLQKFRLGKQPHKEYGDHSTKEGSRASAMDIQRNVASSSGMMSRNMNEMQMEVQRRLHEQLEVQRHLQLRIEAQGKYMQSILERACQTLAGENMAAATAAAAVGGGYKGNLGSSSLSAAVGPPPHPLSFPPFQDLNIYGNTTDQVLDHHNFHHQNIENHFTGNNAADTNIYLGKKRPNPNFGNDVRKGLLMWSDQDHDLSANQSIDDEHRIQIQMATHVSTDLDSLSEIYERKSGLSGDEGNNGGKLLERPSPRRSPLSPMMNPNGGLIQGRNSPFG</sequence>
<gene>
    <name evidence="11" type="primary">APL</name>
    <name evidence="14" type="synonym">FE</name>
    <name evidence="15" type="synonym">PHL14</name>
    <name evidence="12" type="synonym">PHR2</name>
    <name type="synonym">WDY</name>
    <name type="ordered locus">At1g79430</name>
    <name type="ORF">T8K14.15</name>
</gene>
<organism>
    <name type="scientific">Arabidopsis thaliana</name>
    <name type="common">Mouse-ear cress</name>
    <dbReference type="NCBI Taxonomy" id="3702"/>
    <lineage>
        <taxon>Eukaryota</taxon>
        <taxon>Viridiplantae</taxon>
        <taxon>Streptophyta</taxon>
        <taxon>Embryophyta</taxon>
        <taxon>Tracheophyta</taxon>
        <taxon>Spermatophyta</taxon>
        <taxon>Magnoliopsida</taxon>
        <taxon>eudicotyledons</taxon>
        <taxon>Gunneridae</taxon>
        <taxon>Pentapetalae</taxon>
        <taxon>rosids</taxon>
        <taxon>malvids</taxon>
        <taxon>Brassicales</taxon>
        <taxon>Brassicaceae</taxon>
        <taxon>Camelineae</taxon>
        <taxon>Arabidopsis</taxon>
    </lineage>
</organism>
<reference key="1">
    <citation type="journal article" date="2000" name="Nature">
        <title>Sequence and analysis of chromosome 1 of the plant Arabidopsis thaliana.</title>
        <authorList>
            <person name="Theologis A."/>
            <person name="Ecker J.R."/>
            <person name="Palm C.J."/>
            <person name="Federspiel N.A."/>
            <person name="Kaul S."/>
            <person name="White O."/>
            <person name="Alonso J."/>
            <person name="Altafi H."/>
            <person name="Araujo R."/>
            <person name="Bowman C.L."/>
            <person name="Brooks S.Y."/>
            <person name="Buehler E."/>
            <person name="Chan A."/>
            <person name="Chao Q."/>
            <person name="Chen H."/>
            <person name="Cheuk R.F."/>
            <person name="Chin C.W."/>
            <person name="Chung M.K."/>
            <person name="Conn L."/>
            <person name="Conway A.B."/>
            <person name="Conway A.R."/>
            <person name="Creasy T.H."/>
            <person name="Dewar K."/>
            <person name="Dunn P."/>
            <person name="Etgu P."/>
            <person name="Feldblyum T.V."/>
            <person name="Feng J.-D."/>
            <person name="Fong B."/>
            <person name="Fujii C.Y."/>
            <person name="Gill J.E."/>
            <person name="Goldsmith A.D."/>
            <person name="Haas B."/>
            <person name="Hansen N.F."/>
            <person name="Hughes B."/>
            <person name="Huizar L."/>
            <person name="Hunter J.L."/>
            <person name="Jenkins J."/>
            <person name="Johnson-Hopson C."/>
            <person name="Khan S."/>
            <person name="Khaykin E."/>
            <person name="Kim C.J."/>
            <person name="Koo H.L."/>
            <person name="Kremenetskaia I."/>
            <person name="Kurtz D.B."/>
            <person name="Kwan A."/>
            <person name="Lam B."/>
            <person name="Langin-Hooper S."/>
            <person name="Lee A."/>
            <person name="Lee J.M."/>
            <person name="Lenz C.A."/>
            <person name="Li J.H."/>
            <person name="Li Y.-P."/>
            <person name="Lin X."/>
            <person name="Liu S.X."/>
            <person name="Liu Z.A."/>
            <person name="Luros J.S."/>
            <person name="Maiti R."/>
            <person name="Marziali A."/>
            <person name="Militscher J."/>
            <person name="Miranda M."/>
            <person name="Nguyen M."/>
            <person name="Nierman W.C."/>
            <person name="Osborne B.I."/>
            <person name="Pai G."/>
            <person name="Peterson J."/>
            <person name="Pham P.K."/>
            <person name="Rizzo M."/>
            <person name="Rooney T."/>
            <person name="Rowley D."/>
            <person name="Sakano H."/>
            <person name="Salzberg S.L."/>
            <person name="Schwartz J.R."/>
            <person name="Shinn P."/>
            <person name="Southwick A.M."/>
            <person name="Sun H."/>
            <person name="Tallon L.J."/>
            <person name="Tambunga G."/>
            <person name="Toriumi M.J."/>
            <person name="Town C.D."/>
            <person name="Utterback T."/>
            <person name="Van Aken S."/>
            <person name="Vaysberg M."/>
            <person name="Vysotskaia V.S."/>
            <person name="Walker M."/>
            <person name="Wu D."/>
            <person name="Yu G."/>
            <person name="Fraser C.M."/>
            <person name="Venter J.C."/>
            <person name="Davis R.W."/>
        </authorList>
    </citation>
    <scope>NUCLEOTIDE SEQUENCE [LARGE SCALE GENOMIC DNA]</scope>
    <source>
        <strain>cv. Columbia</strain>
    </source>
</reference>
<reference key="2">
    <citation type="journal article" date="2017" name="Plant J.">
        <title>Araport11: a complete reannotation of the Arabidopsis thaliana reference genome.</title>
        <authorList>
            <person name="Cheng C.Y."/>
            <person name="Krishnakumar V."/>
            <person name="Chan A.P."/>
            <person name="Thibaud-Nissen F."/>
            <person name="Schobel S."/>
            <person name="Town C.D."/>
        </authorList>
    </citation>
    <scope>GENOME REANNOTATION</scope>
    <source>
        <strain>cv. Columbia</strain>
    </source>
</reference>
<reference key="3">
    <citation type="journal article" date="2003" name="Science">
        <title>Empirical analysis of transcriptional activity in the Arabidopsis genome.</title>
        <authorList>
            <person name="Yamada K."/>
            <person name="Lim J."/>
            <person name="Dale J.M."/>
            <person name="Chen H."/>
            <person name="Shinn P."/>
            <person name="Palm C.J."/>
            <person name="Southwick A.M."/>
            <person name="Wu H.C."/>
            <person name="Kim C.J."/>
            <person name="Nguyen M."/>
            <person name="Pham P.K."/>
            <person name="Cheuk R.F."/>
            <person name="Karlin-Newmann G."/>
            <person name="Liu S.X."/>
            <person name="Lam B."/>
            <person name="Sakano H."/>
            <person name="Wu T."/>
            <person name="Yu G."/>
            <person name="Miranda M."/>
            <person name="Quach H.L."/>
            <person name="Tripp M."/>
            <person name="Chang C.H."/>
            <person name="Lee J.M."/>
            <person name="Toriumi M.J."/>
            <person name="Chan M.M."/>
            <person name="Tang C.C."/>
            <person name="Onodera C.S."/>
            <person name="Deng J.M."/>
            <person name="Akiyama K."/>
            <person name="Ansari Y."/>
            <person name="Arakawa T."/>
            <person name="Banh J."/>
            <person name="Banno F."/>
            <person name="Bowser L."/>
            <person name="Brooks S.Y."/>
            <person name="Carninci P."/>
            <person name="Chao Q."/>
            <person name="Choy N."/>
            <person name="Enju A."/>
            <person name="Goldsmith A.D."/>
            <person name="Gurjal M."/>
            <person name="Hansen N.F."/>
            <person name="Hayashizaki Y."/>
            <person name="Johnson-Hopson C."/>
            <person name="Hsuan V.W."/>
            <person name="Iida K."/>
            <person name="Karnes M."/>
            <person name="Khan S."/>
            <person name="Koesema E."/>
            <person name="Ishida J."/>
            <person name="Jiang P.X."/>
            <person name="Jones T."/>
            <person name="Kawai J."/>
            <person name="Kamiya A."/>
            <person name="Meyers C."/>
            <person name="Nakajima M."/>
            <person name="Narusaka M."/>
            <person name="Seki M."/>
            <person name="Sakurai T."/>
            <person name="Satou M."/>
            <person name="Tamse R."/>
            <person name="Vaysberg M."/>
            <person name="Wallender E.K."/>
            <person name="Wong C."/>
            <person name="Yamamura Y."/>
            <person name="Yuan S."/>
            <person name="Shinozaki K."/>
            <person name="Davis R.W."/>
            <person name="Theologis A."/>
            <person name="Ecker J.R."/>
        </authorList>
    </citation>
    <scope>NUCLEOTIDE SEQUENCE [LARGE SCALE MRNA] (ISOFORM 2)</scope>
    <source>
        <strain>cv. Columbia</strain>
    </source>
</reference>
<reference key="4">
    <citation type="journal article" date="2009" name="DNA Res.">
        <title>Analysis of multiple occurrences of alternative splicing events in Arabidopsis thaliana using novel sequenced full-length cDNAs.</title>
        <authorList>
            <person name="Iida K."/>
            <person name="Fukami-Kobayashi K."/>
            <person name="Toyoda A."/>
            <person name="Sakaki Y."/>
            <person name="Kobayashi M."/>
            <person name="Seki M."/>
            <person name="Shinozaki K."/>
        </authorList>
    </citation>
    <scope>NUCLEOTIDE SEQUENCE [LARGE SCALE MRNA] (ISOFORM 2)</scope>
    <source>
        <strain>cv. Columbia</strain>
    </source>
</reference>
<reference key="5">
    <citation type="journal article" date="2001" name="Genes Dev.">
        <title>A conserved MYB transcription factor involved in phosphate starvation signaling both in vascular plants and in unicellular algae.</title>
        <authorList>
            <person name="Rubio V."/>
            <person name="Linhares F."/>
            <person name="Solano R."/>
            <person name="Martin A.C."/>
            <person name="Iglesias J."/>
            <person name="Leyva A."/>
            <person name="Paz-Ares J."/>
        </authorList>
    </citation>
    <scope>GENE FAMILY</scope>
</reference>
<reference key="6">
    <citation type="journal article" date="2003" name="Nature">
        <title>APL regulates vascular tissue identity in Arabidopsis.</title>
        <authorList>
            <person name="Bonke M."/>
            <person name="Thitamadee S."/>
            <person name="Maehoenen A.P."/>
            <person name="Hauser M.-T."/>
            <person name="Helariutta Y."/>
        </authorList>
    </citation>
    <scope>FUNCTION</scope>
    <scope>TISSUE SPECIFICITY</scope>
    <scope>SUBCELLULAR LOCATION</scope>
    <scope>DEVELOPMENTAL STAGE</scope>
    <scope>DISRUPTION PHENOTYPE</scope>
</reference>
<reference key="7">
    <citation type="journal article" date="2004" name="Planta">
        <title>Transcripts of MYB-like genes respond to phosphorous and nitrogen deprivation in Arabidopsis.</title>
        <authorList>
            <person name="Todd C.D."/>
            <person name="Zeng P."/>
            <person name="Huete A.M."/>
            <person name="Hoyos M.E."/>
            <person name="Polacco J.C."/>
        </authorList>
    </citation>
    <scope>INDUCTION BY PHOSPHATE</scope>
</reference>
<reference key="8">
    <citation type="journal article" date="2005" name="Plant Physiol.">
        <title>The xylem and phloem transcriptomes from secondary tissues of the Arabidopsis root-hypocotyl.</title>
        <authorList>
            <person name="Zhao C."/>
            <person name="Craig J.C."/>
            <person name="Petzold H.E."/>
            <person name="Dickerman A.W."/>
            <person name="Beers E.P."/>
        </authorList>
    </citation>
    <scope>TISSUE SPECIFICITY</scope>
</reference>
<reference key="9">
    <citation type="journal article" date="2008" name="Plant Cell">
        <title>High-resolution whole-mount imaging of three-dimensional tissue organization and gene expression enables the study of Phloem development and structure in Arabidopsis.</title>
        <authorList>
            <person name="Truernit E."/>
            <person name="Bauby H."/>
            <person name="Dubreucq B."/>
            <person name="Grandjean O."/>
            <person name="Runions J."/>
            <person name="Barthelemy J."/>
            <person name="Palauqui J.-C."/>
        </authorList>
    </citation>
    <scope>FUNCTION</scope>
    <scope>DEVELOPMENTAL STAGE</scope>
</reference>
<reference key="10">
    <citation type="journal article" date="2014" name="Science">
        <title>Plant development. Arabidopsis NAC45/86 direct sieve element morphogenesis culminating in enucleation.</title>
        <authorList>
            <person name="Furuta K.M."/>
            <person name="Yadav S.R."/>
            <person name="Lehesranta S."/>
            <person name="Belevich I."/>
            <person name="Miyashima S."/>
            <person name="Heo J.O."/>
            <person name="Vaten A."/>
            <person name="Lindgren O."/>
            <person name="De Rybel B."/>
            <person name="Van Isterdael G."/>
            <person name="Somervuo P."/>
            <person name="Lichtenberger R."/>
            <person name="Rocha R."/>
            <person name="Thitamadee S."/>
            <person name="Taehtiharju S."/>
            <person name="Auvinen P."/>
            <person name="Beeckman T."/>
            <person name="Jokitalo E."/>
            <person name="Helariutta Y."/>
        </authorList>
    </citation>
    <scope>FUNCTION</scope>
</reference>
<reference key="11">
    <citation type="journal article" date="2015" name="Plant J.">
        <title>FE, a phloem-specific Myb-related protein, promotes flowering through transcriptional activation of FLOWERING LOCUS T and FLOWERING LOCUS T INTERACTING PROTEIN 1.</title>
        <authorList>
            <person name="Abe M."/>
            <person name="Kaya H."/>
            <person name="Watanabe-Taneda A."/>
            <person name="Shibuta M."/>
            <person name="Yamaguchi A."/>
            <person name="Sakamoto T."/>
            <person name="Kurata T."/>
            <person name="Ausin I."/>
            <person name="Araki T."/>
            <person name="Alonso-Blanco C."/>
        </authorList>
    </citation>
    <scope>FUNCTION</scope>
    <scope>MUTAGENESIS OF GLY-89</scope>
    <scope>TISSUE SPECIFICITY</scope>
</reference>
<name>APL_ARATH</name>
<accession>Q9SAK5</accession>
<accession>B9DFC9</accession>
<accession>Q94AW3</accession>
<proteinExistence type="evidence at protein level"/>
<keyword id="KW-0010">Activator</keyword>
<keyword id="KW-0025">Alternative splicing</keyword>
<keyword id="KW-0175">Coiled coil</keyword>
<keyword id="KW-0238">DNA-binding</keyword>
<keyword id="KW-0287">Flowering</keyword>
<keyword id="KW-0539">Nucleus</keyword>
<keyword id="KW-1185">Reference proteome</keyword>
<keyword id="KW-0804">Transcription</keyword>
<keyword id="KW-0805">Transcription regulation</keyword>
<evidence type="ECO:0000255" key="1"/>
<evidence type="ECO:0000255" key="2">
    <source>
        <dbReference type="PROSITE-ProRule" id="PRU00625"/>
    </source>
</evidence>
<evidence type="ECO:0000256" key="3">
    <source>
        <dbReference type="SAM" id="MobiDB-lite"/>
    </source>
</evidence>
<evidence type="ECO:0000269" key="4">
    <source>
    </source>
</evidence>
<evidence type="ECO:0000269" key="5">
    <source>
    </source>
</evidence>
<evidence type="ECO:0000269" key="6">
    <source>
    </source>
</evidence>
<evidence type="ECO:0000269" key="7">
    <source>
    </source>
</evidence>
<evidence type="ECO:0000269" key="8">
    <source>
    </source>
</evidence>
<evidence type="ECO:0000269" key="9">
    <source>
    </source>
</evidence>
<evidence type="ECO:0000303" key="10">
    <source>
    </source>
</evidence>
<evidence type="ECO:0000303" key="11">
    <source>
    </source>
</evidence>
<evidence type="ECO:0000303" key="12">
    <source>
    </source>
</evidence>
<evidence type="ECO:0000303" key="13">
    <source>
    </source>
</evidence>
<evidence type="ECO:0000303" key="14">
    <source>
    </source>
</evidence>
<evidence type="ECO:0000305" key="15"/>
<evidence type="ECO:0000305" key="16">
    <source>
    </source>
</evidence>
<feature type="chain" id="PRO_0000366959" description="Myb family transcription factor APL">
    <location>
        <begin position="1"/>
        <end position="358"/>
    </location>
</feature>
<feature type="domain" description="HTH myb-type" evidence="2">
    <location>
        <begin position="31"/>
        <end position="91"/>
    </location>
</feature>
<feature type="DNA-binding region" description="H-T-H motif" evidence="2">
    <location>
        <begin position="62"/>
        <end position="87"/>
    </location>
</feature>
<feature type="region of interest" description="Disordered" evidence="3">
    <location>
        <begin position="313"/>
        <end position="358"/>
    </location>
</feature>
<feature type="coiled-coil region" evidence="1">
    <location>
        <begin position="125"/>
        <end position="145"/>
    </location>
</feature>
<feature type="short sequence motif" description="LHEQLE" evidence="15">
    <location>
        <begin position="138"/>
        <end position="143"/>
    </location>
</feature>
<feature type="splice variant" id="VSP_036592" description="In isoform 2." evidence="10 13">
    <location>
        <begin position="1"/>
        <end position="65"/>
    </location>
</feature>
<feature type="mutagenesis site" description="In fe-1; severe delay in flowering time under LD conditions, but no effect on flowering time under SD conditions." evidence="9">
    <original>G</original>
    <variation>E</variation>
    <location>
        <position position="89"/>
    </location>
</feature>
<dbReference type="EMBL" id="AC007202">
    <property type="protein sequence ID" value="AAD30233.1"/>
    <property type="status" value="ALT_SEQ"/>
    <property type="molecule type" value="Genomic_DNA"/>
</dbReference>
<dbReference type="EMBL" id="CP002684">
    <property type="protein sequence ID" value="AEE36241.1"/>
    <property type="molecule type" value="Genomic_DNA"/>
</dbReference>
<dbReference type="EMBL" id="CP002684">
    <property type="protein sequence ID" value="AEE36242.1"/>
    <property type="molecule type" value="Genomic_DNA"/>
</dbReference>
<dbReference type="EMBL" id="AY045662">
    <property type="protein sequence ID" value="AAK74020.1"/>
    <property type="molecule type" value="mRNA"/>
</dbReference>
<dbReference type="EMBL" id="AY143841">
    <property type="protein sequence ID" value="AAN28780.1"/>
    <property type="molecule type" value="mRNA"/>
</dbReference>
<dbReference type="EMBL" id="AK316719">
    <property type="protein sequence ID" value="BAH19446.1"/>
    <property type="molecule type" value="mRNA"/>
</dbReference>
<dbReference type="PIR" id="D96825">
    <property type="entry name" value="D96825"/>
</dbReference>
<dbReference type="RefSeq" id="NP_565209.1">
    <molecule id="Q9SAK5-2"/>
    <property type="nucleotide sequence ID" value="NM_106591.2"/>
</dbReference>
<dbReference type="RefSeq" id="NP_849905.1">
    <molecule id="Q9SAK5-1"/>
    <property type="nucleotide sequence ID" value="NM_179574.3"/>
</dbReference>
<dbReference type="SMR" id="Q9SAK5"/>
<dbReference type="BioGRID" id="29500">
    <property type="interactions" value="11"/>
</dbReference>
<dbReference type="FunCoup" id="Q9SAK5">
    <property type="interactions" value="1208"/>
</dbReference>
<dbReference type="IntAct" id="Q9SAK5">
    <property type="interactions" value="17"/>
</dbReference>
<dbReference type="STRING" id="3702.Q9SAK5"/>
<dbReference type="iPTMnet" id="Q9SAK5"/>
<dbReference type="PaxDb" id="3702-AT1G79430.2"/>
<dbReference type="ProteomicsDB" id="240881">
    <molecule id="Q9SAK5-1"/>
</dbReference>
<dbReference type="EnsemblPlants" id="AT1G79430.1">
    <molecule id="Q9SAK5-2"/>
    <property type="protein sequence ID" value="AT1G79430.1"/>
    <property type="gene ID" value="AT1G79430"/>
</dbReference>
<dbReference type="EnsemblPlants" id="AT1G79430.2">
    <molecule id="Q9SAK5-1"/>
    <property type="protein sequence ID" value="AT1G79430.2"/>
    <property type="gene ID" value="AT1G79430"/>
</dbReference>
<dbReference type="GeneID" id="844281"/>
<dbReference type="Gramene" id="AT1G79430.1">
    <molecule id="Q9SAK5-2"/>
    <property type="protein sequence ID" value="AT1G79430.1"/>
    <property type="gene ID" value="AT1G79430"/>
</dbReference>
<dbReference type="Gramene" id="AT1G79430.2">
    <molecule id="Q9SAK5-1"/>
    <property type="protein sequence ID" value="AT1G79430.2"/>
    <property type="gene ID" value="AT1G79430"/>
</dbReference>
<dbReference type="KEGG" id="ath:AT1G79430"/>
<dbReference type="Araport" id="AT1G79430"/>
<dbReference type="TAIR" id="AT1G79430">
    <property type="gene designation" value="APL"/>
</dbReference>
<dbReference type="eggNOG" id="ENOG502QQUN">
    <property type="taxonomic scope" value="Eukaryota"/>
</dbReference>
<dbReference type="HOGENOM" id="CLU_040475_0_0_1"/>
<dbReference type="InParanoid" id="Q9SAK5"/>
<dbReference type="OMA" id="FFANCDM"/>
<dbReference type="PhylomeDB" id="Q9SAK5"/>
<dbReference type="PRO" id="PR:Q9SAK5"/>
<dbReference type="Proteomes" id="UP000006548">
    <property type="component" value="Chromosome 1"/>
</dbReference>
<dbReference type="ExpressionAtlas" id="Q9SAK5">
    <property type="expression patterns" value="baseline and differential"/>
</dbReference>
<dbReference type="GO" id="GO:0005634">
    <property type="term" value="C:nucleus"/>
    <property type="evidence" value="ECO:0000314"/>
    <property type="project" value="TAIR"/>
</dbReference>
<dbReference type="GO" id="GO:0003677">
    <property type="term" value="F:DNA binding"/>
    <property type="evidence" value="ECO:0007669"/>
    <property type="project" value="UniProtKB-KW"/>
</dbReference>
<dbReference type="GO" id="GO:0003700">
    <property type="term" value="F:DNA-binding transcription factor activity"/>
    <property type="evidence" value="ECO:0000250"/>
    <property type="project" value="TAIR"/>
</dbReference>
<dbReference type="GO" id="GO:0009908">
    <property type="term" value="P:flower development"/>
    <property type="evidence" value="ECO:0007669"/>
    <property type="project" value="UniProtKB-KW"/>
</dbReference>
<dbReference type="GO" id="GO:0010088">
    <property type="term" value="P:phloem development"/>
    <property type="evidence" value="ECO:0000315"/>
    <property type="project" value="TAIR"/>
</dbReference>
<dbReference type="GO" id="GO:0045893">
    <property type="term" value="P:positive regulation of DNA-templated transcription"/>
    <property type="evidence" value="ECO:0000270"/>
    <property type="project" value="TAIR"/>
</dbReference>
<dbReference type="GO" id="GO:0006355">
    <property type="term" value="P:regulation of DNA-templated transcription"/>
    <property type="evidence" value="ECO:0000304"/>
    <property type="project" value="TAIR"/>
</dbReference>
<dbReference type="GO" id="GO:0010089">
    <property type="term" value="P:xylem development"/>
    <property type="evidence" value="ECO:0000315"/>
    <property type="project" value="TAIR"/>
</dbReference>
<dbReference type="FunFam" id="1.10.10.60:FF:000002">
    <property type="entry name" value="Myb family transcription factor"/>
    <property type="match status" value="1"/>
</dbReference>
<dbReference type="Gene3D" id="1.10.10.60">
    <property type="entry name" value="Homeodomain-like"/>
    <property type="match status" value="1"/>
</dbReference>
<dbReference type="InterPro" id="IPR009057">
    <property type="entry name" value="Homeodomain-like_sf"/>
</dbReference>
<dbReference type="InterPro" id="IPR025756">
    <property type="entry name" value="Myb_CC_LHEQLE"/>
</dbReference>
<dbReference type="InterPro" id="IPR017930">
    <property type="entry name" value="Myb_dom"/>
</dbReference>
<dbReference type="InterPro" id="IPR006447">
    <property type="entry name" value="Myb_dom_plants"/>
</dbReference>
<dbReference type="InterPro" id="IPR046955">
    <property type="entry name" value="PHR1-like"/>
</dbReference>
<dbReference type="InterPro" id="IPR001005">
    <property type="entry name" value="SANT/Myb"/>
</dbReference>
<dbReference type="NCBIfam" id="TIGR01557">
    <property type="entry name" value="myb_SHAQKYF"/>
    <property type="match status" value="1"/>
</dbReference>
<dbReference type="PANTHER" id="PTHR31499:SF43">
    <property type="entry name" value="MYB FAMILY TRANSCRIPTION FACTOR APL"/>
    <property type="match status" value="1"/>
</dbReference>
<dbReference type="PANTHER" id="PTHR31499">
    <property type="entry name" value="MYB FAMILY TRANSCRIPTION FACTOR PHL11"/>
    <property type="match status" value="1"/>
</dbReference>
<dbReference type="Pfam" id="PF14379">
    <property type="entry name" value="Myb_CC_LHEQLE"/>
    <property type="match status" value="1"/>
</dbReference>
<dbReference type="Pfam" id="PF00249">
    <property type="entry name" value="Myb_DNA-binding"/>
    <property type="match status" value="1"/>
</dbReference>
<dbReference type="SUPFAM" id="SSF46689">
    <property type="entry name" value="Homeodomain-like"/>
    <property type="match status" value="1"/>
</dbReference>
<dbReference type="PROSITE" id="PS51294">
    <property type="entry name" value="HTH_MYB"/>
    <property type="match status" value="1"/>
</dbReference>
<comment type="function">
    <text evidence="4 7 8 9 16">Transcription factor required for phloem identity. Has a dual role both in promoting phloem differentiation and in repressing xylem differentiation during vascular development. Regulates the expression of the transcription factor NAC045 (AC A4VCM0). May activate the transcription of specific genes involved in phosphate uptake or assimilation (PubMed:15592750). Promotes flowering through transcriptional activation of both FT and its transport machinery component, FTIP1 (PubMed:26239308).</text>
</comment>
<comment type="interaction">
    <interactant intactId="EBI-4437350">
        <id>Q9SAK5</id>
    </interactant>
    <interactant intactId="EBI-1238466">
        <id>Q9FL03</id>
        <label>SCL4</label>
    </interactant>
    <organismsDiffer>false</organismsDiffer>
    <experiments>3</experiments>
</comment>
<comment type="interaction">
    <interactant intactId="EBI-4437350">
        <id>Q9SAK5</id>
    </interactant>
    <interactant intactId="EBI-4428591">
        <id>O81316</id>
        <label>SCL6</label>
    </interactant>
    <organismsDiffer>false</organismsDiffer>
    <experiments>3</experiments>
</comment>
<comment type="subcellular location">
    <subcellularLocation>
        <location evidence="4">Nucleus</location>
    </subcellularLocation>
</comment>
<comment type="alternative products">
    <event type="alternative splicing"/>
    <isoform>
        <id>Q9SAK5-1</id>
        <name>1</name>
        <sequence type="displayed"/>
    </isoform>
    <isoform>
        <id>Q9SAK5-2</id>
        <name>2</name>
        <sequence type="described" ref="VSP_036592"/>
    </isoform>
</comment>
<comment type="tissue specificity">
    <text evidence="4 6 9">Expressed in shoots and roots, specifically in the developing protophloem sieve elements (PubMed:14614507). Detected in phloem and/or cambium (PubMed:15923329). Expressed in the phloem tissues of various organs, including leaves and cotyledons, during vegetative growth (PubMed:26239308).</text>
</comment>
<comment type="developmental stage">
    <text evidence="4 7">Specifically expressed in the developing protophloem sieve elements soon after the phloem-specific cell divisions have taken place. Also found in the companion cells and metaphloem sieve elements. May not be necessary for the initial steps of protophloem differentiation.</text>
</comment>
<comment type="induction">
    <text evidence="5">Up-regulated by phosphate deficiency.</text>
</comment>
<comment type="disruption phenotype">
    <text evidence="4">Differentiation of tracheary-like elements of xyleme at the site of the phloem pole leading to seedling lethality.</text>
</comment>
<comment type="miscellaneous">
    <molecule>Isoform 2</molecule>
    <text evidence="15">May be due to an intron retention.</text>
</comment>
<comment type="similarity">
    <text evidence="15">Belongs to the MYB-CC family.</text>
</comment>
<comment type="sequence caution" evidence="15">
    <conflict type="erroneous gene model prediction">
        <sequence resource="EMBL-CDS" id="AAD30233"/>
    </conflict>
</comment>